<organism>
    <name type="scientific">Ehrlichia canis (strain Jake)</name>
    <dbReference type="NCBI Taxonomy" id="269484"/>
    <lineage>
        <taxon>Bacteria</taxon>
        <taxon>Pseudomonadati</taxon>
        <taxon>Pseudomonadota</taxon>
        <taxon>Alphaproteobacteria</taxon>
        <taxon>Rickettsiales</taxon>
        <taxon>Anaplasmataceae</taxon>
        <taxon>Ehrlichia</taxon>
    </lineage>
</organism>
<name>RS4_EHRCJ</name>
<feature type="chain" id="PRO_0000293272" description="Small ribosomal subunit protein uS4">
    <location>
        <begin position="1"/>
        <end position="202"/>
    </location>
</feature>
<feature type="domain" description="S4 RNA-binding" evidence="1">
    <location>
        <begin position="91"/>
        <end position="168"/>
    </location>
</feature>
<comment type="function">
    <text evidence="1">One of the primary rRNA binding proteins, it binds directly to 16S rRNA where it nucleates assembly of the body of the 30S subunit.</text>
</comment>
<comment type="function">
    <text evidence="1">With S5 and S12 plays an important role in translational accuracy.</text>
</comment>
<comment type="subunit">
    <text evidence="1">Part of the 30S ribosomal subunit. Contacts protein S5. The interaction surface between S4 and S5 is involved in control of translational fidelity.</text>
</comment>
<comment type="similarity">
    <text evidence="1">Belongs to the universal ribosomal protein uS4 family.</text>
</comment>
<proteinExistence type="inferred from homology"/>
<evidence type="ECO:0000255" key="1">
    <source>
        <dbReference type="HAMAP-Rule" id="MF_01306"/>
    </source>
</evidence>
<evidence type="ECO:0000305" key="2"/>
<accession>Q3YSR0</accession>
<dbReference type="EMBL" id="CP000107">
    <property type="protein sequence ID" value="AAZ68245.1"/>
    <property type="molecule type" value="Genomic_DNA"/>
</dbReference>
<dbReference type="RefSeq" id="WP_011304323.1">
    <property type="nucleotide sequence ID" value="NC_007354.1"/>
</dbReference>
<dbReference type="SMR" id="Q3YSR0"/>
<dbReference type="FunCoup" id="Q3YSR0">
    <property type="interactions" value="352"/>
</dbReference>
<dbReference type="STRING" id="269484.Ecaj_0194"/>
<dbReference type="KEGG" id="ecn:Ecaj_0194"/>
<dbReference type="eggNOG" id="COG0522">
    <property type="taxonomic scope" value="Bacteria"/>
</dbReference>
<dbReference type="HOGENOM" id="CLU_092403_0_0_5"/>
<dbReference type="InParanoid" id="Q3YSR0"/>
<dbReference type="Proteomes" id="UP000000435">
    <property type="component" value="Chromosome"/>
</dbReference>
<dbReference type="GO" id="GO:0015935">
    <property type="term" value="C:small ribosomal subunit"/>
    <property type="evidence" value="ECO:0007669"/>
    <property type="project" value="InterPro"/>
</dbReference>
<dbReference type="GO" id="GO:0019843">
    <property type="term" value="F:rRNA binding"/>
    <property type="evidence" value="ECO:0007669"/>
    <property type="project" value="UniProtKB-UniRule"/>
</dbReference>
<dbReference type="GO" id="GO:0003735">
    <property type="term" value="F:structural constituent of ribosome"/>
    <property type="evidence" value="ECO:0007669"/>
    <property type="project" value="InterPro"/>
</dbReference>
<dbReference type="GO" id="GO:0042274">
    <property type="term" value="P:ribosomal small subunit biogenesis"/>
    <property type="evidence" value="ECO:0007669"/>
    <property type="project" value="TreeGrafter"/>
</dbReference>
<dbReference type="GO" id="GO:0006412">
    <property type="term" value="P:translation"/>
    <property type="evidence" value="ECO:0007669"/>
    <property type="project" value="UniProtKB-UniRule"/>
</dbReference>
<dbReference type="CDD" id="cd00165">
    <property type="entry name" value="S4"/>
    <property type="match status" value="1"/>
</dbReference>
<dbReference type="FunFam" id="3.10.290.10:FF:000001">
    <property type="entry name" value="30S ribosomal protein S4"/>
    <property type="match status" value="1"/>
</dbReference>
<dbReference type="Gene3D" id="1.10.1050.10">
    <property type="entry name" value="Ribosomal Protein S4 Delta 41, Chain A, domain 1"/>
    <property type="match status" value="1"/>
</dbReference>
<dbReference type="Gene3D" id="3.10.290.10">
    <property type="entry name" value="RNA-binding S4 domain"/>
    <property type="match status" value="1"/>
</dbReference>
<dbReference type="HAMAP" id="MF_01306_B">
    <property type="entry name" value="Ribosomal_uS4_B"/>
    <property type="match status" value="1"/>
</dbReference>
<dbReference type="InterPro" id="IPR022801">
    <property type="entry name" value="Ribosomal_uS4"/>
</dbReference>
<dbReference type="InterPro" id="IPR005709">
    <property type="entry name" value="Ribosomal_uS4_bac-type"/>
</dbReference>
<dbReference type="InterPro" id="IPR001912">
    <property type="entry name" value="Ribosomal_uS4_N"/>
</dbReference>
<dbReference type="InterPro" id="IPR002942">
    <property type="entry name" value="S4_RNA-bd"/>
</dbReference>
<dbReference type="InterPro" id="IPR036986">
    <property type="entry name" value="S4_RNA-bd_sf"/>
</dbReference>
<dbReference type="NCBIfam" id="NF003717">
    <property type="entry name" value="PRK05327.1"/>
    <property type="match status" value="1"/>
</dbReference>
<dbReference type="NCBIfam" id="TIGR01017">
    <property type="entry name" value="rpsD_bact"/>
    <property type="match status" value="1"/>
</dbReference>
<dbReference type="PANTHER" id="PTHR11831">
    <property type="entry name" value="30S 40S RIBOSOMAL PROTEIN"/>
    <property type="match status" value="1"/>
</dbReference>
<dbReference type="PANTHER" id="PTHR11831:SF4">
    <property type="entry name" value="SMALL RIBOSOMAL SUBUNIT PROTEIN US4M"/>
    <property type="match status" value="1"/>
</dbReference>
<dbReference type="Pfam" id="PF00163">
    <property type="entry name" value="Ribosomal_S4"/>
    <property type="match status" value="1"/>
</dbReference>
<dbReference type="Pfam" id="PF01479">
    <property type="entry name" value="S4"/>
    <property type="match status" value="1"/>
</dbReference>
<dbReference type="SMART" id="SM01390">
    <property type="entry name" value="Ribosomal_S4"/>
    <property type="match status" value="1"/>
</dbReference>
<dbReference type="SMART" id="SM00363">
    <property type="entry name" value="S4"/>
    <property type="match status" value="1"/>
</dbReference>
<dbReference type="SUPFAM" id="SSF55174">
    <property type="entry name" value="Alpha-L RNA-binding motif"/>
    <property type="match status" value="1"/>
</dbReference>
<dbReference type="PROSITE" id="PS50889">
    <property type="entry name" value="S4"/>
    <property type="match status" value="1"/>
</dbReference>
<sequence>MAVQRKYRASRRLGVSLWGRSKDPFNTRNYPPGQHGNMGYKKPSDFGKQFAAHKKFKFYYAISSKQMRNVFLKAYKKRGDTGDNFVGLLESRLSSILYNSGLVPTIFSARQLISHKHVLVNGKTVNISSYIVKVGDVVTLKEKAKNLPAVIAAIQSQEHKVPDYLEVDTQEKSVRYLRVPKYCEVPYPATMEVNLVIEFYSR</sequence>
<protein>
    <recommendedName>
        <fullName evidence="1">Small ribosomal subunit protein uS4</fullName>
    </recommendedName>
    <alternativeName>
        <fullName evidence="2">30S ribosomal protein S4</fullName>
    </alternativeName>
</protein>
<keyword id="KW-0687">Ribonucleoprotein</keyword>
<keyword id="KW-0689">Ribosomal protein</keyword>
<keyword id="KW-0694">RNA-binding</keyword>
<keyword id="KW-0699">rRNA-binding</keyword>
<reference key="1">
    <citation type="journal article" date="2006" name="J. Bacteriol.">
        <title>The genome of the obligately intracellular bacterium Ehrlichia canis reveals themes of complex membrane structure and immune evasion strategies.</title>
        <authorList>
            <person name="Mavromatis K."/>
            <person name="Doyle C.K."/>
            <person name="Lykidis A."/>
            <person name="Ivanova N."/>
            <person name="Francino M.P."/>
            <person name="Chain P."/>
            <person name="Shin M."/>
            <person name="Malfatti S."/>
            <person name="Larimer F."/>
            <person name="Copeland A."/>
            <person name="Detter J.C."/>
            <person name="Land M."/>
            <person name="Richardson P.M."/>
            <person name="Yu X.J."/>
            <person name="Walker D.H."/>
            <person name="McBride J.W."/>
            <person name="Kyrpides N.C."/>
        </authorList>
    </citation>
    <scope>NUCLEOTIDE SEQUENCE [LARGE SCALE GENOMIC DNA]</scope>
    <source>
        <strain>Jake</strain>
    </source>
</reference>
<gene>
    <name evidence="1" type="primary">rpsD</name>
    <name type="ordered locus">Ecaj_0194</name>
</gene>